<name>MCA1_PICST</name>
<keyword id="KW-0053">Apoptosis</keyword>
<keyword id="KW-0378">Hydrolase</keyword>
<keyword id="KW-0645">Protease</keyword>
<keyword id="KW-1185">Reference proteome</keyword>
<keyword id="KW-0788">Thiol protease</keyword>
<keyword id="KW-0865">Zymogen</keyword>
<dbReference type="EC" id="3.4.22.-"/>
<dbReference type="EMBL" id="CP000498">
    <property type="protein sequence ID" value="ABN65975.1"/>
    <property type="molecule type" value="Genomic_DNA"/>
</dbReference>
<dbReference type="RefSeq" id="XP_001384004.1">
    <property type="nucleotide sequence ID" value="XM_001383967.1"/>
</dbReference>
<dbReference type="SMR" id="A3LSY7"/>
<dbReference type="FunCoup" id="A3LSY7">
    <property type="interactions" value="387"/>
</dbReference>
<dbReference type="STRING" id="322104.A3LSY7"/>
<dbReference type="GeneID" id="4838642"/>
<dbReference type="KEGG" id="pic:PICST_83452"/>
<dbReference type="eggNOG" id="KOG1546">
    <property type="taxonomic scope" value="Eukaryota"/>
</dbReference>
<dbReference type="HOGENOM" id="CLU_029389_0_2_1"/>
<dbReference type="InParanoid" id="A3LSY7"/>
<dbReference type="OMA" id="EYGHHTP"/>
<dbReference type="OrthoDB" id="3223806at2759"/>
<dbReference type="Proteomes" id="UP000002258">
    <property type="component" value="Chromosome 4"/>
</dbReference>
<dbReference type="GO" id="GO:0005829">
    <property type="term" value="C:cytosol"/>
    <property type="evidence" value="ECO:0007669"/>
    <property type="project" value="EnsemblFungi"/>
</dbReference>
<dbReference type="GO" id="GO:0005634">
    <property type="term" value="C:nucleus"/>
    <property type="evidence" value="ECO:0007669"/>
    <property type="project" value="EnsemblFungi"/>
</dbReference>
<dbReference type="GO" id="GO:0004198">
    <property type="term" value="F:calcium-dependent cysteine-type endopeptidase activity"/>
    <property type="evidence" value="ECO:0007669"/>
    <property type="project" value="EnsemblFungi"/>
</dbReference>
<dbReference type="GO" id="GO:0006915">
    <property type="term" value="P:apoptotic process"/>
    <property type="evidence" value="ECO:0007669"/>
    <property type="project" value="UniProtKB-KW"/>
</dbReference>
<dbReference type="GO" id="GO:0006515">
    <property type="term" value="P:protein quality control for misfolded or incompletely synthesized proteins"/>
    <property type="evidence" value="ECO:0007669"/>
    <property type="project" value="EnsemblFungi"/>
</dbReference>
<dbReference type="Gene3D" id="3.40.50.12660">
    <property type="match status" value="1"/>
</dbReference>
<dbReference type="InterPro" id="IPR029030">
    <property type="entry name" value="Caspase-like_dom_sf"/>
</dbReference>
<dbReference type="InterPro" id="IPR050452">
    <property type="entry name" value="Metacaspase"/>
</dbReference>
<dbReference type="InterPro" id="IPR011600">
    <property type="entry name" value="Pept_C14_caspase"/>
</dbReference>
<dbReference type="PANTHER" id="PTHR48104:SF30">
    <property type="entry name" value="METACASPASE-1"/>
    <property type="match status" value="1"/>
</dbReference>
<dbReference type="PANTHER" id="PTHR48104">
    <property type="entry name" value="METACASPASE-4"/>
    <property type="match status" value="1"/>
</dbReference>
<dbReference type="Pfam" id="PF00656">
    <property type="entry name" value="Peptidase_C14"/>
    <property type="match status" value="1"/>
</dbReference>
<dbReference type="SUPFAM" id="SSF52129">
    <property type="entry name" value="Caspase-like"/>
    <property type="match status" value="1"/>
</dbReference>
<reference key="1">
    <citation type="journal article" date="2007" name="Nat. Biotechnol.">
        <title>Genome sequence of the lignocellulose-bioconverting and xylose-fermenting yeast Pichia stipitis.</title>
        <authorList>
            <person name="Jeffries T.W."/>
            <person name="Grigoriev I.V."/>
            <person name="Grimwood J."/>
            <person name="Laplaza J.M."/>
            <person name="Aerts A."/>
            <person name="Salamov A."/>
            <person name="Schmutz J."/>
            <person name="Lindquist E."/>
            <person name="Dehal P."/>
            <person name="Shapiro H."/>
            <person name="Jin Y.-S."/>
            <person name="Passoth V."/>
            <person name="Richardson P.M."/>
        </authorList>
    </citation>
    <scope>NUCLEOTIDE SEQUENCE [LARGE SCALE GENOMIC DNA]</scope>
    <source>
        <strain>ATCC 58785 / CBS 6054 / NBRC 10063 / NRRL Y-11545</strain>
    </source>
</reference>
<accession>A3LSY7</accession>
<protein>
    <recommendedName>
        <fullName>Metacaspase-1</fullName>
        <ecNumber>3.4.22.-</ecNumber>
    </recommendedName>
</protein>
<organism>
    <name type="scientific">Scheffersomyces stipitis (strain ATCC 58785 / CBS 6054 / NBRC 10063 / NRRL Y-11545)</name>
    <name type="common">Yeast</name>
    <name type="synonym">Pichia stipitis</name>
    <dbReference type="NCBI Taxonomy" id="322104"/>
    <lineage>
        <taxon>Eukaryota</taxon>
        <taxon>Fungi</taxon>
        <taxon>Dikarya</taxon>
        <taxon>Ascomycota</taxon>
        <taxon>Saccharomycotina</taxon>
        <taxon>Pichiomycetes</taxon>
        <taxon>Debaryomycetaceae</taxon>
        <taxon>Scheffersomyces</taxon>
    </lineage>
</organism>
<proteinExistence type="inferred from homology"/>
<comment type="function">
    <text evidence="1">Involved in cell death (apoptosis).</text>
</comment>
<comment type="similarity">
    <text evidence="4">Belongs to the peptidase C14B family.</text>
</comment>
<sequence>MFPGSGHNTYGGYPPPQGPPPNNNGYNSGPNNSYRQQGYSRPQGPPPGQYDQQSQYSQQSQPSAPPQGGTGYGDQSQWGRPTGPPPSGSQSFGQNSGYTFQYSNCSGRKKALLVGVNYFGSPNELRGCINDVKNMSSFLVDHWGYQWNDIVILTDDQNDISRVPTKNNIIRAMQWLVKDARPNDSLVFHYSGHGGTTADTDGDEESGYDDVIYPVDFQQAGHIVDDDMHAIMVRPLPPGCRLTALYDSCHSGTALDLPYVYSTKGVVKEPNLLKDAGSDALNAFISYERGNIGGAISSLTGLVKKVARQGSTNQDQVRQAKFSAADVISISGCKDDQTSADAKENGRATGAMSWSFIKVLNELPNQSYLSLLNNMRTILAAKYSQKPQLSCSHPQDMNIQFIM</sequence>
<evidence type="ECO:0000250" key="1"/>
<evidence type="ECO:0000255" key="2"/>
<evidence type="ECO:0000256" key="3">
    <source>
        <dbReference type="SAM" id="MobiDB-lite"/>
    </source>
</evidence>
<evidence type="ECO:0000305" key="4"/>
<feature type="propeptide" id="PRO_0000333666" evidence="2">
    <location>
        <begin position="1"/>
        <end status="unknown"/>
    </location>
</feature>
<feature type="chain" id="PRO_0000333667" description="Metacaspase-1">
    <location>
        <begin status="unknown"/>
        <end position="403"/>
    </location>
</feature>
<feature type="region of interest" description="Disordered" evidence="3">
    <location>
        <begin position="1"/>
        <end position="95"/>
    </location>
</feature>
<feature type="compositionally biased region" description="Pro residues" evidence="3">
    <location>
        <begin position="13"/>
        <end position="22"/>
    </location>
</feature>
<feature type="compositionally biased region" description="Low complexity" evidence="3">
    <location>
        <begin position="23"/>
        <end position="34"/>
    </location>
</feature>
<feature type="compositionally biased region" description="Low complexity" evidence="3">
    <location>
        <begin position="49"/>
        <end position="62"/>
    </location>
</feature>
<feature type="active site" evidence="1">
    <location>
        <position position="193"/>
    </location>
</feature>
<feature type="active site" evidence="1">
    <location>
        <position position="249"/>
    </location>
</feature>
<gene>
    <name type="primary">MCA1</name>
    <name type="ORF">PICST_83452</name>
</gene>